<feature type="chain" id="PRO_0000271129" description="tRNA-uridine aminocarboxypropyltransferase 2">
    <location>
        <begin position="1"/>
        <end position="298"/>
    </location>
</feature>
<feature type="region of interest" description="Disordered" evidence="3">
    <location>
        <begin position="1"/>
        <end position="52"/>
    </location>
</feature>
<feature type="short sequence motif" description="DXTW" evidence="1">
    <location>
        <begin position="178"/>
        <end position="181"/>
    </location>
</feature>
<feature type="modified residue" description="N-acetylmethionine" evidence="2">
    <location>
        <position position="1"/>
    </location>
</feature>
<feature type="modified residue" description="Phosphoserine" evidence="2">
    <location>
        <position position="132"/>
    </location>
</feature>
<sequence>MESQKEARILQEPVARPPGASRSQTPNAKERQEGGPVPAAAALGAEADDDSADRLWELPVEPAKRRPECSRCSRPQKVCLCPFLPAHPLHISTHLYIIQHPAEENKVLRTVPLLAACLPQDKCKVKIGRRFSEERDPELSTVCRKSGTLILYPGAEAANLEEFILDSPVYPSTIIIIDGTWSQAKDIFYKNSLFRHPKQVQLKTSISSQYVIRMQPTNRCLSTLECAAVALSILEKNNYIQETLLRPLQALCSFQLQHGAQIRLSKEHLLKNGLYTKPMPKNKRKLRKMELLMNSVKI</sequence>
<organism>
    <name type="scientific">Macaca fascicularis</name>
    <name type="common">Crab-eating macaque</name>
    <name type="synonym">Cynomolgus monkey</name>
    <dbReference type="NCBI Taxonomy" id="9541"/>
    <lineage>
        <taxon>Eukaryota</taxon>
        <taxon>Metazoa</taxon>
        <taxon>Chordata</taxon>
        <taxon>Craniata</taxon>
        <taxon>Vertebrata</taxon>
        <taxon>Euteleostomi</taxon>
        <taxon>Mammalia</taxon>
        <taxon>Eutheria</taxon>
        <taxon>Euarchontoglires</taxon>
        <taxon>Primates</taxon>
        <taxon>Haplorrhini</taxon>
        <taxon>Catarrhini</taxon>
        <taxon>Cercopithecidae</taxon>
        <taxon>Cercopithecinae</taxon>
        <taxon>Macaca</taxon>
    </lineage>
</organism>
<proteinExistence type="evidence at transcript level"/>
<reference key="1">
    <citation type="submission" date="2005-06" db="EMBL/GenBank/DDBJ databases">
        <title>DNA sequences of macaque genes expressed in brain or testis and its evolutionary implications.</title>
        <authorList>
            <consortium name="International consortium for macaque cDNA sequencing and analysis"/>
        </authorList>
    </citation>
    <scope>NUCLEOTIDE SEQUENCE [LARGE SCALE MRNA]</scope>
    <source>
        <tissue>Testis</tissue>
    </source>
</reference>
<accession>Q4R7M4</accession>
<gene>
    <name evidence="2" type="primary">DTWD2</name>
    <name type="ORF">QtsA-14809</name>
</gene>
<keyword id="KW-0007">Acetylation</keyword>
<keyword id="KW-0963">Cytoplasm</keyword>
<keyword id="KW-0539">Nucleus</keyword>
<keyword id="KW-0597">Phosphoprotein</keyword>
<keyword id="KW-1185">Reference proteome</keyword>
<keyword id="KW-0949">S-adenosyl-L-methionine</keyword>
<keyword id="KW-0808">Transferase</keyword>
<keyword id="KW-0819">tRNA processing</keyword>
<name>DTWD2_MACFA</name>
<protein>
    <recommendedName>
        <fullName evidence="4">tRNA-uridine aminocarboxypropyltransferase 2</fullName>
        <ecNumber evidence="2">2.5.1.25</ecNumber>
    </recommendedName>
    <alternativeName>
        <fullName>DTW domain-containing protein 2</fullName>
    </alternativeName>
</protein>
<dbReference type="EC" id="2.5.1.25" evidence="2"/>
<dbReference type="EMBL" id="AB168791">
    <property type="protein sequence ID" value="BAE00898.1"/>
    <property type="molecule type" value="mRNA"/>
</dbReference>
<dbReference type="RefSeq" id="NP_001270440.1">
    <property type="nucleotide sequence ID" value="NM_001283511.1"/>
</dbReference>
<dbReference type="RefSeq" id="XP_045250069.1">
    <property type="nucleotide sequence ID" value="XM_045394134.2"/>
</dbReference>
<dbReference type="STRING" id="9541.ENSMFAP00000023853"/>
<dbReference type="GeneID" id="101926717"/>
<dbReference type="eggNOG" id="KOG4382">
    <property type="taxonomic scope" value="Eukaryota"/>
</dbReference>
<dbReference type="Proteomes" id="UP000233100">
    <property type="component" value="Unplaced"/>
</dbReference>
<dbReference type="GO" id="GO:0005737">
    <property type="term" value="C:cytoplasm"/>
    <property type="evidence" value="ECO:0007669"/>
    <property type="project" value="UniProtKB-SubCell"/>
</dbReference>
<dbReference type="GO" id="GO:0005634">
    <property type="term" value="C:nucleus"/>
    <property type="evidence" value="ECO:0007669"/>
    <property type="project" value="UniProtKB-SubCell"/>
</dbReference>
<dbReference type="GO" id="GO:0016432">
    <property type="term" value="F:tRNA-uridine aminocarboxypropyltransferase activity"/>
    <property type="evidence" value="ECO:0000250"/>
    <property type="project" value="UniProtKB"/>
</dbReference>
<dbReference type="GO" id="GO:0141217">
    <property type="term" value="P:RNA glycosylation"/>
    <property type="evidence" value="ECO:0000250"/>
    <property type="project" value="UniProtKB"/>
</dbReference>
<dbReference type="GO" id="GO:0006400">
    <property type="term" value="P:tRNA modification"/>
    <property type="evidence" value="ECO:0000250"/>
    <property type="project" value="UniProtKB"/>
</dbReference>
<dbReference type="InterPro" id="IPR005636">
    <property type="entry name" value="DTW"/>
</dbReference>
<dbReference type="InterPro" id="IPR039262">
    <property type="entry name" value="DTWD2/TAPT"/>
</dbReference>
<dbReference type="PANTHER" id="PTHR21392">
    <property type="entry name" value="TRNA-URIDINE AMINOCARBOXYPROPYLTRANSFERASE 2"/>
    <property type="match status" value="1"/>
</dbReference>
<dbReference type="PANTHER" id="PTHR21392:SF0">
    <property type="entry name" value="TRNA-URIDINE AMINOCARBOXYPROPYLTRANSFERASE 2"/>
    <property type="match status" value="1"/>
</dbReference>
<dbReference type="Pfam" id="PF03942">
    <property type="entry name" value="DTW"/>
    <property type="match status" value="1"/>
</dbReference>
<dbReference type="SMART" id="SM01144">
    <property type="entry name" value="DTW"/>
    <property type="match status" value="1"/>
</dbReference>
<comment type="function">
    <text evidence="2">Catalyzes the formation of 3-(3-amino-3-carboxypropyl)uridine (acp3U) at position 20a in the D-loop of several cytoplasmic tRNAs (acp3U(20a)). Also has a weak activity to form acp3U at position 20 in the D-loop of tRNAs (acp3U(20)). Involved in glycoRNA biosynthesis by mediating formation of acp3U, which acts as an attachment site for N-glycans on tRNAs. GlycoRNAs consist of RNAs modified with secretory N-glycans that are presented on the cell surface.</text>
</comment>
<comment type="catalytic activity">
    <reaction evidence="2">
        <text>a uridine in tRNA + S-adenosyl-L-methionine = a 3-[(3S)-3-amino-3-carboxypropyl]uridine in tRNA + S-methyl-5'-thioadenosine + H(+)</text>
        <dbReference type="Rhea" id="RHEA:62432"/>
        <dbReference type="Rhea" id="RHEA-COMP:13339"/>
        <dbReference type="Rhea" id="RHEA-COMP:16092"/>
        <dbReference type="ChEBI" id="CHEBI:15378"/>
        <dbReference type="ChEBI" id="CHEBI:17509"/>
        <dbReference type="ChEBI" id="CHEBI:59789"/>
        <dbReference type="ChEBI" id="CHEBI:65315"/>
        <dbReference type="ChEBI" id="CHEBI:82930"/>
        <dbReference type="EC" id="2.5.1.25"/>
    </reaction>
</comment>
<comment type="subcellular location">
    <subcellularLocation>
        <location evidence="2">Nucleus</location>
    </subcellularLocation>
    <subcellularLocation>
        <location evidence="2">Cytoplasm</location>
    </subcellularLocation>
</comment>
<comment type="similarity">
    <text evidence="4">Belongs to the TDD superfamily. DTWD2 family.</text>
</comment>
<evidence type="ECO:0000250" key="1">
    <source>
        <dbReference type="UniProtKB" id="Q47319"/>
    </source>
</evidence>
<evidence type="ECO:0000250" key="2">
    <source>
        <dbReference type="UniProtKB" id="Q8NBA8"/>
    </source>
</evidence>
<evidence type="ECO:0000256" key="3">
    <source>
        <dbReference type="SAM" id="MobiDB-lite"/>
    </source>
</evidence>
<evidence type="ECO:0000305" key="4"/>